<gene>
    <name evidence="7" type="primary">CPTP</name>
    <name evidence="4 7" type="synonym">GLTPD1</name>
</gene>
<protein>
    <recommendedName>
        <fullName evidence="4 5">Ceramide-1-phosphate transfer protein</fullName>
        <shortName evidence="4 5">CPTP</shortName>
    </recommendedName>
    <alternativeName>
        <fullName evidence="5">Glycolipid transfer protein domain-containing protein 1</fullName>
        <shortName evidence="4 5">GLTP domain-containing protein 1</shortName>
    </alternativeName>
</protein>
<proteinExistence type="evidence at protein level"/>
<evidence type="ECO:0000269" key="1">
    <source>
    </source>
</evidence>
<evidence type="ECO:0000269" key="2">
    <source>
    </source>
</evidence>
<evidence type="ECO:0000269" key="3">
    <source>
    </source>
</evidence>
<evidence type="ECO:0000303" key="4">
    <source>
    </source>
</evidence>
<evidence type="ECO:0000305" key="5"/>
<evidence type="ECO:0000305" key="6">
    <source>
    </source>
</evidence>
<evidence type="ECO:0000312" key="7">
    <source>
        <dbReference type="HGNC" id="HGNC:28116"/>
    </source>
</evidence>
<evidence type="ECO:0007829" key="8">
    <source>
        <dbReference type="PDB" id="4K84"/>
    </source>
</evidence>
<sequence>MDDSETGFNLKVVLVSFKQCLDEKEEVLLDPYIASWKGLVRFLNSLGTIFSFISKDVVSKLRIMERLRGGPQSEHYRSLQAMVAHELSNRLVDLERRSHHPESGCRTVLRLHRALHWLQLFLEGLRTSPEDARTSALCADSYNASLAAYHPWVVRRAVTVAFCTLPTREVFLEAMNVGPPEQAVQMLGEALPFIQRVYNVSQKLYAEHSLLDLP</sequence>
<keyword id="KW-0002">3D-structure</keyword>
<keyword id="KW-1003">Cell membrane</keyword>
<keyword id="KW-0963">Cytoplasm</keyword>
<keyword id="KW-0967">Endosome</keyword>
<keyword id="KW-0333">Golgi apparatus</keyword>
<keyword id="KW-0445">Lipid transport</keyword>
<keyword id="KW-0446">Lipid-binding</keyword>
<keyword id="KW-0472">Membrane</keyword>
<keyword id="KW-0539">Nucleus</keyword>
<keyword id="KW-1267">Proteomics identification</keyword>
<keyword id="KW-1185">Reference proteome</keyword>
<keyword id="KW-0813">Transport</keyword>
<dbReference type="EMBL" id="CR599582">
    <property type="status" value="NOT_ANNOTATED_CDS"/>
    <property type="molecule type" value="mRNA"/>
</dbReference>
<dbReference type="EMBL" id="AL139287">
    <property type="status" value="NOT_ANNOTATED_CDS"/>
    <property type="molecule type" value="Genomic_DNA"/>
</dbReference>
<dbReference type="EMBL" id="CH471183">
    <property type="protein sequence ID" value="EAW56230.1"/>
    <property type="status" value="ALT_SEQ"/>
    <property type="molecule type" value="Genomic_DNA"/>
</dbReference>
<dbReference type="EMBL" id="BC098429">
    <property type="protein sequence ID" value="AAH98429.1"/>
    <property type="molecule type" value="mRNA"/>
</dbReference>
<dbReference type="CCDS" id="CCDS30555.1"/>
<dbReference type="RefSeq" id="NP_001025056.1">
    <property type="nucleotide sequence ID" value="NM_001029885.2"/>
</dbReference>
<dbReference type="RefSeq" id="XP_005244858.1">
    <property type="nucleotide sequence ID" value="XM_005244801.5"/>
</dbReference>
<dbReference type="RefSeq" id="XP_011540502.1">
    <property type="nucleotide sequence ID" value="XM_011542200.3"/>
</dbReference>
<dbReference type="RefSeq" id="XP_054194857.1">
    <property type="nucleotide sequence ID" value="XM_054338882.1"/>
</dbReference>
<dbReference type="RefSeq" id="XP_054194858.1">
    <property type="nucleotide sequence ID" value="XM_054338883.1"/>
</dbReference>
<dbReference type="PDB" id="4K80">
    <property type="method" value="X-ray"/>
    <property type="resolution" value="2.05 A"/>
    <property type="chains" value="A=1-214"/>
</dbReference>
<dbReference type="PDB" id="4K84">
    <property type="method" value="X-ray"/>
    <property type="resolution" value="1.90 A"/>
    <property type="chains" value="A/B=1-214"/>
</dbReference>
<dbReference type="PDB" id="4K85">
    <property type="method" value="X-ray"/>
    <property type="resolution" value="1.90 A"/>
    <property type="chains" value="A/B/C/D=1-214"/>
</dbReference>
<dbReference type="PDB" id="4K8N">
    <property type="method" value="X-ray"/>
    <property type="resolution" value="3.10 A"/>
    <property type="chains" value="A/B/C/D/E/F=1-214"/>
</dbReference>
<dbReference type="PDB" id="4KBS">
    <property type="method" value="X-ray"/>
    <property type="resolution" value="1.90 A"/>
    <property type="chains" value="A/B=1-214"/>
</dbReference>
<dbReference type="PDB" id="4KF6">
    <property type="method" value="X-ray"/>
    <property type="resolution" value="3.20 A"/>
    <property type="chains" value="A/B/C/D/E/F=1-214"/>
</dbReference>
<dbReference type="PDBsum" id="4K80"/>
<dbReference type="PDBsum" id="4K84"/>
<dbReference type="PDBsum" id="4K85"/>
<dbReference type="PDBsum" id="4K8N"/>
<dbReference type="PDBsum" id="4KBS"/>
<dbReference type="PDBsum" id="4KF6"/>
<dbReference type="SMR" id="Q5TA50"/>
<dbReference type="BioGRID" id="123305">
    <property type="interactions" value="8"/>
</dbReference>
<dbReference type="FunCoup" id="Q5TA50">
    <property type="interactions" value="765"/>
</dbReference>
<dbReference type="IntAct" id="Q5TA50">
    <property type="interactions" value="8"/>
</dbReference>
<dbReference type="STRING" id="9606.ENSP00000343890"/>
<dbReference type="SwissLipids" id="SLP:000000406"/>
<dbReference type="GlyGen" id="Q5TA50">
    <property type="glycosylation" value="2 sites, 1 O-linked glycan (1 site)"/>
</dbReference>
<dbReference type="iPTMnet" id="Q5TA50"/>
<dbReference type="PhosphoSitePlus" id="Q5TA50"/>
<dbReference type="BioMuta" id="CPTP"/>
<dbReference type="DMDM" id="74745771"/>
<dbReference type="jPOST" id="Q5TA50"/>
<dbReference type="MassIVE" id="Q5TA50"/>
<dbReference type="PaxDb" id="9606-ENSP00000343890"/>
<dbReference type="PeptideAtlas" id="Q5TA50"/>
<dbReference type="ProteomicsDB" id="64828"/>
<dbReference type="Pumba" id="Q5TA50"/>
<dbReference type="Antibodypedia" id="66414">
    <property type="antibodies" value="10 antibodies from 7 providers"/>
</dbReference>
<dbReference type="DNASU" id="80772"/>
<dbReference type="Ensembl" id="ENST00000343938.9">
    <property type="protein sequence ID" value="ENSP00000343890.4"/>
    <property type="gene ID" value="ENSG00000224051.7"/>
</dbReference>
<dbReference type="GeneID" id="80772"/>
<dbReference type="KEGG" id="hsa:80772"/>
<dbReference type="MANE-Select" id="ENST00000343938.9">
    <property type="protein sequence ID" value="ENSP00000343890.4"/>
    <property type="RefSeq nucleotide sequence ID" value="NM_001029885.2"/>
    <property type="RefSeq protein sequence ID" value="NP_001025056.1"/>
</dbReference>
<dbReference type="AGR" id="HGNC:28116"/>
<dbReference type="CTD" id="80772"/>
<dbReference type="DisGeNET" id="80772"/>
<dbReference type="GeneCards" id="CPTP"/>
<dbReference type="HGNC" id="HGNC:28116">
    <property type="gene designation" value="CPTP"/>
</dbReference>
<dbReference type="HPA" id="ENSG00000224051">
    <property type="expression patterns" value="Low tissue specificity"/>
</dbReference>
<dbReference type="MIM" id="615467">
    <property type="type" value="gene"/>
</dbReference>
<dbReference type="neXtProt" id="NX_Q5TA50"/>
<dbReference type="OpenTargets" id="ENSG00000224051"/>
<dbReference type="PharmGKB" id="PA162389853"/>
<dbReference type="VEuPathDB" id="HostDB:ENSG00000224051"/>
<dbReference type="eggNOG" id="KOG4189">
    <property type="taxonomic scope" value="Eukaryota"/>
</dbReference>
<dbReference type="GeneTree" id="ENSGT00940000161763"/>
<dbReference type="HOGENOM" id="CLU_079649_1_0_1"/>
<dbReference type="InParanoid" id="Q5TA50"/>
<dbReference type="OMA" id="ICTDSYN"/>
<dbReference type="OrthoDB" id="116883at2759"/>
<dbReference type="PAN-GO" id="Q5TA50">
    <property type="GO annotations" value="5 GO annotations based on evolutionary models"/>
</dbReference>
<dbReference type="PhylomeDB" id="Q5TA50"/>
<dbReference type="TreeFam" id="TF316097"/>
<dbReference type="PathwayCommons" id="Q5TA50"/>
<dbReference type="Reactome" id="R-HSA-9845576">
    <property type="pathway name" value="Glycosphingolipid transport"/>
</dbReference>
<dbReference type="SignaLink" id="Q5TA50"/>
<dbReference type="BioGRID-ORCS" id="80772">
    <property type="hits" value="13 hits in 1156 CRISPR screens"/>
</dbReference>
<dbReference type="EvolutionaryTrace" id="Q5TA50"/>
<dbReference type="GenomeRNAi" id="80772"/>
<dbReference type="Pharos" id="Q5TA50">
    <property type="development level" value="Tbio"/>
</dbReference>
<dbReference type="PRO" id="PR:Q5TA50"/>
<dbReference type="Proteomes" id="UP000005640">
    <property type="component" value="Chromosome 1"/>
</dbReference>
<dbReference type="RNAct" id="Q5TA50">
    <property type="molecule type" value="protein"/>
</dbReference>
<dbReference type="Bgee" id="ENSG00000224051">
    <property type="expression patterns" value="Expressed in apex of heart and 189 other cell types or tissues"/>
</dbReference>
<dbReference type="ExpressionAtlas" id="Q5TA50">
    <property type="expression patterns" value="baseline and differential"/>
</dbReference>
<dbReference type="GO" id="GO:0005829">
    <property type="term" value="C:cytosol"/>
    <property type="evidence" value="ECO:0000314"/>
    <property type="project" value="HPA"/>
</dbReference>
<dbReference type="GO" id="GO:0010008">
    <property type="term" value="C:endosome membrane"/>
    <property type="evidence" value="ECO:0007669"/>
    <property type="project" value="UniProtKB-SubCell"/>
</dbReference>
<dbReference type="GO" id="GO:0005794">
    <property type="term" value="C:Golgi apparatus"/>
    <property type="evidence" value="ECO:0007669"/>
    <property type="project" value="UniProtKB-SubCell"/>
</dbReference>
<dbReference type="GO" id="GO:0005640">
    <property type="term" value="C:nuclear outer membrane"/>
    <property type="evidence" value="ECO:0007669"/>
    <property type="project" value="UniProtKB-SubCell"/>
</dbReference>
<dbReference type="GO" id="GO:0005886">
    <property type="term" value="C:plasma membrane"/>
    <property type="evidence" value="ECO:0007669"/>
    <property type="project" value="UniProtKB-SubCell"/>
</dbReference>
<dbReference type="GO" id="GO:1902387">
    <property type="term" value="F:ceramide 1-phosphate binding"/>
    <property type="evidence" value="ECO:0000314"/>
    <property type="project" value="UniProtKB"/>
</dbReference>
<dbReference type="GO" id="GO:1902388">
    <property type="term" value="F:ceramide 1-phosphate transfer activity"/>
    <property type="evidence" value="ECO:0000314"/>
    <property type="project" value="UniProtKB"/>
</dbReference>
<dbReference type="GO" id="GO:0005543">
    <property type="term" value="F:phospholipid binding"/>
    <property type="evidence" value="ECO:0000314"/>
    <property type="project" value="UniProtKB"/>
</dbReference>
<dbReference type="GO" id="GO:1902389">
    <property type="term" value="P:ceramide 1-phosphate transport"/>
    <property type="evidence" value="ECO:0000314"/>
    <property type="project" value="UniProtKB"/>
</dbReference>
<dbReference type="GO" id="GO:0035627">
    <property type="term" value="P:ceramide transport"/>
    <property type="evidence" value="ECO:0000318"/>
    <property type="project" value="GO_Central"/>
</dbReference>
<dbReference type="GO" id="GO:0120009">
    <property type="term" value="P:intermembrane lipid transfer"/>
    <property type="evidence" value="ECO:0000318"/>
    <property type="project" value="GO_Central"/>
</dbReference>
<dbReference type="GO" id="GO:0010507">
    <property type="term" value="P:negative regulation of autophagy"/>
    <property type="evidence" value="ECO:0000315"/>
    <property type="project" value="UniProtKB"/>
</dbReference>
<dbReference type="GO" id="GO:0032691">
    <property type="term" value="P:negative regulation of interleukin-1 beta production"/>
    <property type="evidence" value="ECO:0000315"/>
    <property type="project" value="UniProtKB"/>
</dbReference>
<dbReference type="GO" id="GO:1900226">
    <property type="term" value="P:negative regulation of NLRP3 inflammasome complex assembly"/>
    <property type="evidence" value="ECO:0000315"/>
    <property type="project" value="UniProtKB"/>
</dbReference>
<dbReference type="FunFam" id="1.10.3520.10:FF:000002">
    <property type="entry name" value="Ceramide-1-phosphate transfer protein"/>
    <property type="match status" value="1"/>
</dbReference>
<dbReference type="Gene3D" id="1.10.3520.10">
    <property type="entry name" value="Glycolipid transfer protein"/>
    <property type="match status" value="1"/>
</dbReference>
<dbReference type="InterPro" id="IPR036497">
    <property type="entry name" value="GLTP_sf"/>
</dbReference>
<dbReference type="InterPro" id="IPR014830">
    <property type="entry name" value="Glycolipid_transfer_prot_dom"/>
</dbReference>
<dbReference type="PANTHER" id="PTHR10219:SF20">
    <property type="entry name" value="CERAMIDE-1-PHOSPHATE TRANSFER PROTEIN"/>
    <property type="match status" value="1"/>
</dbReference>
<dbReference type="PANTHER" id="PTHR10219">
    <property type="entry name" value="GLYCOLIPID TRANSFER PROTEIN-RELATED"/>
    <property type="match status" value="1"/>
</dbReference>
<dbReference type="Pfam" id="PF08718">
    <property type="entry name" value="GLTP"/>
    <property type="match status" value="1"/>
</dbReference>
<dbReference type="SUPFAM" id="SSF110004">
    <property type="entry name" value="Glycolipid transfer protein, GLTP"/>
    <property type="match status" value="1"/>
</dbReference>
<accession>Q5TA50</accession>
<accession>Q4G0E6</accession>
<accession>Q7L5A4</accession>
<comment type="function">
    <text evidence="1 2 3">Mediates the intracellular transfer of ceramide-1-phosphate (C1P) between organelle membranes and the cell membrane. Required for normal structure of the Golgi stacks. Can bind phosphoceramides with a variety of aliphatic chains, but has a preference for lipids with saturated C16:0 or monounsaturated C18:1 aliphatic chains, and is inefficient with phosphoceramides containing lignoceryl (C24:0). Plays a role in the regulation of the cellular levels of ceramide-1-phosphate, and thereby contributes to the regulation of phospholipase PLA2G4A activity and the release of arachidonic acid. Has no activity with galactosylceramide, lactosylceramide, sphingomyelin, phosphatidylcholine, phosphatidic acid and ceramide. C1P transfer is stimulated by phosphatidylserine in C1P source vesicles (PubMed:28011644). Regulates autophagy, inflammasome mediated IL1B and IL18 processing, and pyroptosis, but not apoptosis (PubMed:29164996).</text>
</comment>
<comment type="catalytic activity">
    <reaction evidence="1">
        <text>N-(hexadecanoyl)-sphing-4-enine-1-phosphate(in) = N-(hexadecanoyl)-sphing-4-enine-1-phosphate(out)</text>
        <dbReference type="Rhea" id="RHEA:45680"/>
        <dbReference type="ChEBI" id="CHEBI:72963"/>
    </reaction>
    <physiologicalReaction direction="left-to-right" evidence="6">
        <dbReference type="Rhea" id="RHEA:45681"/>
    </physiologicalReaction>
</comment>
<comment type="catalytic activity">
    <reaction evidence="1">
        <text>N-(9Z-octadecenoyl)-sphing-4-enine-1-phosphate(in) = N-(9Z-octadecenoyl)-sphing-4-enine-1-phosphate(out)</text>
        <dbReference type="Rhea" id="RHEA:45688"/>
        <dbReference type="ChEBI" id="CHEBI:85378"/>
    </reaction>
    <physiologicalReaction direction="left-to-right" evidence="6">
        <dbReference type="Rhea" id="RHEA:45689"/>
    </physiologicalReaction>
</comment>
<comment type="subcellular location">
    <subcellularLocation>
        <location evidence="1">Cytoplasm</location>
        <location evidence="1">Cytosol</location>
    </subcellularLocation>
    <subcellularLocation>
        <location evidence="1">Golgi apparatus</location>
        <location evidence="1">trans-Golgi network membrane</location>
        <topology evidence="1">Peripheral membrane protein</topology>
    </subcellularLocation>
    <subcellularLocation>
        <location evidence="1">Cell membrane</location>
        <topology evidence="1">Peripheral membrane protein</topology>
        <orientation evidence="1">Cytoplasmic side</orientation>
    </subcellularLocation>
    <subcellularLocation>
        <location evidence="1">Endosome membrane</location>
        <topology evidence="1">Peripheral membrane protein</topology>
    </subcellularLocation>
    <subcellularLocation>
        <location evidence="1">Nucleus outer membrane</location>
        <topology evidence="1">Peripheral membrane protein</topology>
    </subcellularLocation>
</comment>
<comment type="tissue specificity">
    <text evidence="1">Ubiquitous. Detected in heart, brain, placenta, lung, liver, skeletal muscle, kidney, pancreas, spleen, thymus, prostate, testis, ovary, small intestine, colon and peripheral blood leukocytes.</text>
</comment>
<comment type="similarity">
    <text evidence="5">Belongs to the GLTP family.</text>
</comment>
<comment type="sequence caution" evidence="5">
    <conflict type="erroneous gene model prediction">
        <sequence resource="EMBL-CDS" id="EAW56230"/>
    </conflict>
</comment>
<organism>
    <name type="scientific">Homo sapiens</name>
    <name type="common">Human</name>
    <dbReference type="NCBI Taxonomy" id="9606"/>
    <lineage>
        <taxon>Eukaryota</taxon>
        <taxon>Metazoa</taxon>
        <taxon>Chordata</taxon>
        <taxon>Craniata</taxon>
        <taxon>Vertebrata</taxon>
        <taxon>Euteleostomi</taxon>
        <taxon>Mammalia</taxon>
        <taxon>Eutheria</taxon>
        <taxon>Euarchontoglires</taxon>
        <taxon>Primates</taxon>
        <taxon>Haplorrhini</taxon>
        <taxon>Catarrhini</taxon>
        <taxon>Hominidae</taxon>
        <taxon>Homo</taxon>
    </lineage>
</organism>
<reference key="1">
    <citation type="submission" date="2004-07" db="EMBL/GenBank/DDBJ databases">
        <title>Full-length cDNA libraries and normalization.</title>
        <authorList>
            <person name="Li W.B."/>
            <person name="Gruber C."/>
            <person name="Jessee J."/>
            <person name="Polayes D."/>
        </authorList>
    </citation>
    <scope>NUCLEOTIDE SEQUENCE [LARGE SCALE MRNA]</scope>
    <source>
        <tissue>B-cell</tissue>
    </source>
</reference>
<reference key="2">
    <citation type="journal article" date="2006" name="Nature">
        <title>The DNA sequence and biological annotation of human chromosome 1.</title>
        <authorList>
            <person name="Gregory S.G."/>
            <person name="Barlow K.F."/>
            <person name="McLay K.E."/>
            <person name="Kaul R."/>
            <person name="Swarbreck D."/>
            <person name="Dunham A."/>
            <person name="Scott C.E."/>
            <person name="Howe K.L."/>
            <person name="Woodfine K."/>
            <person name="Spencer C.C.A."/>
            <person name="Jones M.C."/>
            <person name="Gillson C."/>
            <person name="Searle S."/>
            <person name="Zhou Y."/>
            <person name="Kokocinski F."/>
            <person name="McDonald L."/>
            <person name="Evans R."/>
            <person name="Phillips K."/>
            <person name="Atkinson A."/>
            <person name="Cooper R."/>
            <person name="Jones C."/>
            <person name="Hall R.E."/>
            <person name="Andrews T.D."/>
            <person name="Lloyd C."/>
            <person name="Ainscough R."/>
            <person name="Almeida J.P."/>
            <person name="Ambrose K.D."/>
            <person name="Anderson F."/>
            <person name="Andrew R.W."/>
            <person name="Ashwell R.I.S."/>
            <person name="Aubin K."/>
            <person name="Babbage A.K."/>
            <person name="Bagguley C.L."/>
            <person name="Bailey J."/>
            <person name="Beasley H."/>
            <person name="Bethel G."/>
            <person name="Bird C.P."/>
            <person name="Bray-Allen S."/>
            <person name="Brown J.Y."/>
            <person name="Brown A.J."/>
            <person name="Buckley D."/>
            <person name="Burton J."/>
            <person name="Bye J."/>
            <person name="Carder C."/>
            <person name="Chapman J.C."/>
            <person name="Clark S.Y."/>
            <person name="Clarke G."/>
            <person name="Clee C."/>
            <person name="Cobley V."/>
            <person name="Collier R.E."/>
            <person name="Corby N."/>
            <person name="Coville G.J."/>
            <person name="Davies J."/>
            <person name="Deadman R."/>
            <person name="Dunn M."/>
            <person name="Earthrowl M."/>
            <person name="Ellington A.G."/>
            <person name="Errington H."/>
            <person name="Frankish A."/>
            <person name="Frankland J."/>
            <person name="French L."/>
            <person name="Garner P."/>
            <person name="Garnett J."/>
            <person name="Gay L."/>
            <person name="Ghori M.R.J."/>
            <person name="Gibson R."/>
            <person name="Gilby L.M."/>
            <person name="Gillett W."/>
            <person name="Glithero R.J."/>
            <person name="Grafham D.V."/>
            <person name="Griffiths C."/>
            <person name="Griffiths-Jones S."/>
            <person name="Grocock R."/>
            <person name="Hammond S."/>
            <person name="Harrison E.S.I."/>
            <person name="Hart E."/>
            <person name="Haugen E."/>
            <person name="Heath P.D."/>
            <person name="Holmes S."/>
            <person name="Holt K."/>
            <person name="Howden P.J."/>
            <person name="Hunt A.R."/>
            <person name="Hunt S.E."/>
            <person name="Hunter G."/>
            <person name="Isherwood J."/>
            <person name="James R."/>
            <person name="Johnson C."/>
            <person name="Johnson D."/>
            <person name="Joy A."/>
            <person name="Kay M."/>
            <person name="Kershaw J.K."/>
            <person name="Kibukawa M."/>
            <person name="Kimberley A.M."/>
            <person name="King A."/>
            <person name="Knights A.J."/>
            <person name="Lad H."/>
            <person name="Laird G."/>
            <person name="Lawlor S."/>
            <person name="Leongamornlert D.A."/>
            <person name="Lloyd D.M."/>
            <person name="Loveland J."/>
            <person name="Lovell J."/>
            <person name="Lush M.J."/>
            <person name="Lyne R."/>
            <person name="Martin S."/>
            <person name="Mashreghi-Mohammadi M."/>
            <person name="Matthews L."/>
            <person name="Matthews N.S.W."/>
            <person name="McLaren S."/>
            <person name="Milne S."/>
            <person name="Mistry S."/>
            <person name="Moore M.J.F."/>
            <person name="Nickerson T."/>
            <person name="O'Dell C.N."/>
            <person name="Oliver K."/>
            <person name="Palmeiri A."/>
            <person name="Palmer S.A."/>
            <person name="Parker A."/>
            <person name="Patel D."/>
            <person name="Pearce A.V."/>
            <person name="Peck A.I."/>
            <person name="Pelan S."/>
            <person name="Phelps K."/>
            <person name="Phillimore B.J."/>
            <person name="Plumb R."/>
            <person name="Rajan J."/>
            <person name="Raymond C."/>
            <person name="Rouse G."/>
            <person name="Saenphimmachak C."/>
            <person name="Sehra H.K."/>
            <person name="Sheridan E."/>
            <person name="Shownkeen R."/>
            <person name="Sims S."/>
            <person name="Skuce C.D."/>
            <person name="Smith M."/>
            <person name="Steward C."/>
            <person name="Subramanian S."/>
            <person name="Sycamore N."/>
            <person name="Tracey A."/>
            <person name="Tromans A."/>
            <person name="Van Helmond Z."/>
            <person name="Wall M."/>
            <person name="Wallis J.M."/>
            <person name="White S."/>
            <person name="Whitehead S.L."/>
            <person name="Wilkinson J.E."/>
            <person name="Willey D.L."/>
            <person name="Williams H."/>
            <person name="Wilming L."/>
            <person name="Wray P.W."/>
            <person name="Wu Z."/>
            <person name="Coulson A."/>
            <person name="Vaudin M."/>
            <person name="Sulston J.E."/>
            <person name="Durbin R.M."/>
            <person name="Hubbard T."/>
            <person name="Wooster R."/>
            <person name="Dunham I."/>
            <person name="Carter N.P."/>
            <person name="McVean G."/>
            <person name="Ross M.T."/>
            <person name="Harrow J."/>
            <person name="Olson M.V."/>
            <person name="Beck S."/>
            <person name="Rogers J."/>
            <person name="Bentley D.R."/>
        </authorList>
    </citation>
    <scope>NUCLEOTIDE SEQUENCE [LARGE SCALE GENOMIC DNA]</scope>
</reference>
<reference key="3">
    <citation type="submission" date="2005-07" db="EMBL/GenBank/DDBJ databases">
        <authorList>
            <person name="Mural R.J."/>
            <person name="Istrail S."/>
            <person name="Sutton G.G."/>
            <person name="Florea L."/>
            <person name="Halpern A.L."/>
            <person name="Mobarry C.M."/>
            <person name="Lippert R."/>
            <person name="Walenz B."/>
            <person name="Shatkay H."/>
            <person name="Dew I."/>
            <person name="Miller J.R."/>
            <person name="Flanigan M.J."/>
            <person name="Edwards N.J."/>
            <person name="Bolanos R."/>
            <person name="Fasulo D."/>
            <person name="Halldorsson B.V."/>
            <person name="Hannenhalli S."/>
            <person name="Turner R."/>
            <person name="Yooseph S."/>
            <person name="Lu F."/>
            <person name="Nusskern D.R."/>
            <person name="Shue B.C."/>
            <person name="Zheng X.H."/>
            <person name="Zhong F."/>
            <person name="Delcher A.L."/>
            <person name="Huson D.H."/>
            <person name="Kravitz S.A."/>
            <person name="Mouchard L."/>
            <person name="Reinert K."/>
            <person name="Remington K.A."/>
            <person name="Clark A.G."/>
            <person name="Waterman M.S."/>
            <person name="Eichler E.E."/>
            <person name="Adams M.D."/>
            <person name="Hunkapiller M.W."/>
            <person name="Myers E.W."/>
            <person name="Venter J.C."/>
        </authorList>
    </citation>
    <scope>NUCLEOTIDE SEQUENCE [LARGE SCALE GENOMIC DNA]</scope>
</reference>
<reference key="4">
    <citation type="journal article" date="2004" name="Genome Res.">
        <title>The status, quality, and expansion of the NIH full-length cDNA project: the Mammalian Gene Collection (MGC).</title>
        <authorList>
            <consortium name="The MGC Project Team"/>
        </authorList>
    </citation>
    <scope>NUCLEOTIDE SEQUENCE [LARGE SCALE MRNA] OF 55-214</scope>
    <source>
        <tissue>Neuroblastoma</tissue>
    </source>
</reference>
<reference key="5">
    <citation type="journal article" date="2014" name="J. Proteomics">
        <title>An enzyme assisted RP-RPLC approach for in-depth analysis of human liver phosphoproteome.</title>
        <authorList>
            <person name="Bian Y."/>
            <person name="Song C."/>
            <person name="Cheng K."/>
            <person name="Dong M."/>
            <person name="Wang F."/>
            <person name="Huang J."/>
            <person name="Sun D."/>
            <person name="Wang L."/>
            <person name="Ye M."/>
            <person name="Zou H."/>
        </authorList>
    </citation>
    <scope>IDENTIFICATION BY MASS SPECTROMETRY [LARGE SCALE ANALYSIS]</scope>
    <source>
        <tissue>Liver</tissue>
    </source>
</reference>
<reference key="6">
    <citation type="journal article" date="2018" name="Autophagy">
        <title>CPTP: A sphingolipid transfer protein that regulates autophagy and inflammasome activation.</title>
        <authorList>
            <person name="Mishra S.K."/>
            <person name="Gao Y.G."/>
            <person name="Deng Y."/>
            <person name="Chalfant C.E."/>
            <person name="Hinchcliffe E.H."/>
            <person name="Brown R.E."/>
        </authorList>
    </citation>
    <scope>FUNCTION</scope>
    <scope>MUTAGENESIS OF LYS-60 AND ARG-106</scope>
</reference>
<reference key="7">
    <citation type="journal article" date="2017" name="J. Biol. Chem.">
        <title>Phosphatidylserine Stimulates Ceramide 1-Phosphate (C1P) Intermembrane Transfer by C1P Transfer Proteins.</title>
        <authorList>
            <person name="Zhai X."/>
            <person name="Gao Y.G."/>
            <person name="Mishra S.K."/>
            <person name="Simanshu D.K."/>
            <person name="Boldyrev I.A."/>
            <person name="Benson L.M."/>
            <person name="Bergen H.R. III"/>
            <person name="Malinina L."/>
            <person name="Mundy J."/>
            <person name="Molotkovsky J.G."/>
            <person name="Patel D.J."/>
            <person name="Brown R.E."/>
        </authorList>
    </citation>
    <scope>FUNCTION</scope>
    <scope>LIPID-BINDING</scope>
</reference>
<reference key="8">
    <citation type="journal article" date="2013" name="Nature">
        <title>Non-vesicular trafficking by a ceramide-1-phosphate transfer protein regulates eicosanoids.</title>
        <authorList>
            <person name="Simanshu D.K."/>
            <person name="Kamlekar R.K."/>
            <person name="Wijesinghe D.S."/>
            <person name="Zou X."/>
            <person name="Zhai X."/>
            <person name="Mishra S.K."/>
            <person name="Molotkovsky J.G."/>
            <person name="Malinina L."/>
            <person name="Hinchcliffe E.H."/>
            <person name="Chalfant C.E."/>
            <person name="Brown R.E."/>
            <person name="Patel D.J."/>
        </authorList>
    </citation>
    <scope>X-RAY CRYSTALLOGRAPHY (1.9 ANGSTROMS) IN COMPLEXES WITH CERAMIDE-1-PHOSPHATE</scope>
    <scope>FUNCTION</scope>
    <scope>CATALYTIC ACTIVITY</scope>
    <scope>SUBCELLULAR LOCATION</scope>
    <scope>LIPID-BINDING</scope>
    <scope>MUTAGENESIS OF PHE-42; LEU-43; PHE-50; ILE-53; ASP-56; LYS-60; ARG-97; ARG-106; ARG-110; ARG-113; TRP-117; LEU-118; TYR-149 AND VAL-158</scope>
    <scope>TISSUE SPECIFICITY</scope>
</reference>
<feature type="chain" id="PRO_0000317156" description="Ceramide-1-phosphate transfer protein">
    <location>
        <begin position="1"/>
        <end position="214"/>
    </location>
</feature>
<feature type="binding site" evidence="1">
    <location>
        <position position="56"/>
    </location>
    <ligand>
        <name>an N-acylsphingoid base 1-phosphate</name>
        <dbReference type="ChEBI" id="CHEBI:84404"/>
    </ligand>
</feature>
<feature type="binding site" evidence="1">
    <location>
        <position position="60"/>
    </location>
    <ligand>
        <name>an N-acylsphingoid base 1-phosphate</name>
        <dbReference type="ChEBI" id="CHEBI:84404"/>
    </ligand>
</feature>
<feature type="binding site" evidence="1">
    <location>
        <position position="106"/>
    </location>
    <ligand>
        <name>an N-acylsphingoid base 1-phosphate</name>
        <dbReference type="ChEBI" id="CHEBI:84404"/>
    </ligand>
</feature>
<feature type="binding site" evidence="1">
    <location>
        <position position="110"/>
    </location>
    <ligand>
        <name>an N-acylsphingoid base 1-phosphate</name>
        <dbReference type="ChEBI" id="CHEBI:84404"/>
    </ligand>
</feature>
<feature type="binding site" evidence="1">
    <location>
        <position position="150"/>
    </location>
    <ligand>
        <name>an N-acylsphingoid base 1-phosphate</name>
        <dbReference type="ChEBI" id="CHEBI:84404"/>
    </ligand>
</feature>
<feature type="mutagenesis site" description="Increases phosphoceramide transfer." evidence="1">
    <original>F</original>
    <variation>A</variation>
    <location>
        <position position="42"/>
    </location>
</feature>
<feature type="mutagenesis site" description="Nearly abolishes phosphoceramide transfer." evidence="1">
    <original>L</original>
    <variation>R</variation>
    <location>
        <position position="43"/>
    </location>
</feature>
<feature type="mutagenesis site" description="Slightly reduces phosphoceramide transfer." evidence="1">
    <original>F</original>
    <variation>R</variation>
    <location>
        <position position="50"/>
    </location>
</feature>
<feature type="mutagenesis site" description="Slightly decreases phosphoceramide transfer." evidence="1">
    <original>I</original>
    <variation>N</variation>
    <location>
        <position position="53"/>
    </location>
</feature>
<feature type="mutagenesis site" description="Slightly decreases phosphoceramide transfer." evidence="1">
    <original>D</original>
    <variation>V</variation>
    <location>
        <position position="56"/>
    </location>
</feature>
<feature type="mutagenesis site" description="Nearly abolishes phosphoceramide transfer. Induces autophagy in a dominant negative manner." evidence="1 3">
    <original>K</original>
    <variation>A</variation>
    <location>
        <position position="60"/>
    </location>
</feature>
<feature type="mutagenesis site" description="No effect." evidence="1">
    <original>R</original>
    <variation>L</variation>
    <location>
        <position position="97"/>
    </location>
</feature>
<feature type="mutagenesis site" description="Nearly abolishes phosphoceramide transfer. Induces autophagy in a dominant negative manner." evidence="1 3">
    <original>R</original>
    <variation>L</variation>
    <location>
        <position position="106"/>
    </location>
</feature>
<feature type="mutagenesis site" description="Reduces phosphoceramide transfer." evidence="1">
    <original>R</original>
    <variation>L</variation>
    <location>
        <position position="110"/>
    </location>
</feature>
<feature type="mutagenesis site" description="Strongly reduces phosphoceramide transfer." evidence="1">
    <original>R</original>
    <variation>E</variation>
    <variation>L</variation>
    <location>
        <position position="113"/>
    </location>
</feature>
<feature type="mutagenesis site" description="Slightly reduces phosphoceramide transfer." evidence="1">
    <original>W</original>
    <variation>A</variation>
    <location>
        <position position="117"/>
    </location>
</feature>
<feature type="mutagenesis site" description="Abolishes phosphoceramide transfer." evidence="1">
    <original>L</original>
    <variation>R</variation>
    <location>
        <position position="118"/>
    </location>
</feature>
<feature type="mutagenesis site" description="Reduces phosphoceramide transfer." evidence="1">
    <original>Y</original>
    <variation>A</variation>
    <location>
        <position position="149"/>
    </location>
</feature>
<feature type="mutagenesis site" description="Abolishes phosphoceramide transfer." evidence="1">
    <original>V</original>
    <variation>N</variation>
    <location>
        <position position="158"/>
    </location>
</feature>
<feature type="helix" evidence="8">
    <location>
        <begin position="10"/>
        <end position="15"/>
    </location>
</feature>
<feature type="helix" evidence="8">
    <location>
        <begin position="16"/>
        <end position="20"/>
    </location>
</feature>
<feature type="helix" evidence="8">
    <location>
        <begin position="29"/>
        <end position="46"/>
    </location>
</feature>
<feature type="helix" evidence="8">
    <location>
        <begin position="48"/>
        <end position="50"/>
    </location>
</feature>
<feature type="helix" evidence="8">
    <location>
        <begin position="51"/>
        <end position="69"/>
    </location>
</feature>
<feature type="helix" evidence="8">
    <location>
        <begin position="73"/>
        <end position="76"/>
    </location>
</feature>
<feature type="helix" evidence="8">
    <location>
        <begin position="79"/>
        <end position="88"/>
    </location>
</feature>
<feature type="strand" evidence="8">
    <location>
        <begin position="94"/>
        <end position="96"/>
    </location>
</feature>
<feature type="helix" evidence="8">
    <location>
        <begin position="104"/>
        <end position="127"/>
    </location>
</feature>
<feature type="helix" evidence="8">
    <location>
        <begin position="134"/>
        <end position="144"/>
    </location>
</feature>
<feature type="helix" evidence="8">
    <location>
        <begin position="146"/>
        <end position="149"/>
    </location>
</feature>
<feature type="helix" evidence="8">
    <location>
        <begin position="152"/>
        <end position="162"/>
    </location>
</feature>
<feature type="helix" evidence="8">
    <location>
        <begin position="168"/>
        <end position="174"/>
    </location>
</feature>
<feature type="strand" evidence="8">
    <location>
        <begin position="177"/>
        <end position="179"/>
    </location>
</feature>
<feature type="helix" evidence="8">
    <location>
        <begin position="180"/>
        <end position="207"/>
    </location>
</feature>
<name>CPTP_HUMAN</name>